<feature type="chain" id="PRO_0000208019" description="GTPase-activating protein gyp10">
    <location>
        <begin position="1"/>
        <end position="373"/>
    </location>
</feature>
<feature type="transmembrane region" description="Helical" evidence="1">
    <location>
        <begin position="343"/>
        <end position="363"/>
    </location>
</feature>
<feature type="domain" description="Rab-GAP TBC" evidence="2">
    <location>
        <begin position="35"/>
        <end position="220"/>
    </location>
</feature>
<proteinExistence type="predicted"/>
<dbReference type="EMBL" id="CU329671">
    <property type="protein sequence ID" value="CAB37599.1"/>
    <property type="molecule type" value="Genomic_DNA"/>
</dbReference>
<dbReference type="PIR" id="T40602">
    <property type="entry name" value="T40602"/>
</dbReference>
<dbReference type="RefSeq" id="NP_595501.1">
    <property type="nucleotide sequence ID" value="NM_001021411.2"/>
</dbReference>
<dbReference type="SMR" id="O94661"/>
<dbReference type="BioGRID" id="277664">
    <property type="interactions" value="19"/>
</dbReference>
<dbReference type="FunCoup" id="O94661">
    <property type="interactions" value="301"/>
</dbReference>
<dbReference type="STRING" id="284812.O94661"/>
<dbReference type="iPTMnet" id="O94661"/>
<dbReference type="PaxDb" id="4896-SPBC651.03c.1"/>
<dbReference type="EnsemblFungi" id="SPBC651.03c.1">
    <property type="protein sequence ID" value="SPBC651.03c.1:pep"/>
    <property type="gene ID" value="SPBC651.03c"/>
</dbReference>
<dbReference type="GeneID" id="2541149"/>
<dbReference type="KEGG" id="spo:2541149"/>
<dbReference type="PomBase" id="SPBC651.03c">
    <property type="gene designation" value="gyp10"/>
</dbReference>
<dbReference type="VEuPathDB" id="FungiDB:SPBC651.03c"/>
<dbReference type="eggNOG" id="KOG2595">
    <property type="taxonomic scope" value="Eukaryota"/>
</dbReference>
<dbReference type="HOGENOM" id="CLU_039465_0_1_1"/>
<dbReference type="InParanoid" id="O94661"/>
<dbReference type="OMA" id="VYMFAQI"/>
<dbReference type="PhylomeDB" id="O94661"/>
<dbReference type="Reactome" id="R-SPO-204005">
    <property type="pathway name" value="COPII-mediated vesicle transport"/>
</dbReference>
<dbReference type="PRO" id="PR:O94661"/>
<dbReference type="Proteomes" id="UP000002485">
    <property type="component" value="Chromosome II"/>
</dbReference>
<dbReference type="GO" id="GO:0005829">
    <property type="term" value="C:cytosol"/>
    <property type="evidence" value="ECO:0007005"/>
    <property type="project" value="PomBase"/>
</dbReference>
<dbReference type="GO" id="GO:0005783">
    <property type="term" value="C:endoplasmic reticulum"/>
    <property type="evidence" value="ECO:0000314"/>
    <property type="project" value="PomBase"/>
</dbReference>
<dbReference type="GO" id="GO:0005789">
    <property type="term" value="C:endoplasmic reticulum membrane"/>
    <property type="evidence" value="ECO:0000318"/>
    <property type="project" value="GO_Central"/>
</dbReference>
<dbReference type="GO" id="GO:0005634">
    <property type="term" value="C:nucleus"/>
    <property type="evidence" value="ECO:0007005"/>
    <property type="project" value="PomBase"/>
</dbReference>
<dbReference type="GO" id="GO:0005096">
    <property type="term" value="F:GTPase activator activity"/>
    <property type="evidence" value="ECO:0000318"/>
    <property type="project" value="GO_Central"/>
</dbReference>
<dbReference type="GO" id="GO:0006888">
    <property type="term" value="P:endoplasmic reticulum to Golgi vesicle-mediated transport"/>
    <property type="evidence" value="ECO:0000318"/>
    <property type="project" value="GO_Central"/>
</dbReference>
<dbReference type="GO" id="GO:0000920">
    <property type="term" value="P:septum digestion after cytokinesis"/>
    <property type="evidence" value="ECO:0000316"/>
    <property type="project" value="PomBase"/>
</dbReference>
<dbReference type="GO" id="GO:0016192">
    <property type="term" value="P:vesicle-mediated transport"/>
    <property type="evidence" value="ECO:0000316"/>
    <property type="project" value="PomBase"/>
</dbReference>
<dbReference type="FunFam" id="1.10.8.1310:FF:000005">
    <property type="entry name" value="GTPase-activating protein gyp10"/>
    <property type="match status" value="1"/>
</dbReference>
<dbReference type="FunFam" id="1.10.472.80:FF:000060">
    <property type="entry name" value="TBC domain protein, putative"/>
    <property type="match status" value="1"/>
</dbReference>
<dbReference type="Gene3D" id="1.10.8.1310">
    <property type="match status" value="1"/>
</dbReference>
<dbReference type="Gene3D" id="1.10.472.80">
    <property type="entry name" value="Ypt/Rab-GAP domain of gyp1p, domain 3"/>
    <property type="match status" value="1"/>
</dbReference>
<dbReference type="InterPro" id="IPR000195">
    <property type="entry name" value="Rab-GAP-TBC_dom"/>
</dbReference>
<dbReference type="InterPro" id="IPR035969">
    <property type="entry name" value="Rab-GAP_TBC_sf"/>
</dbReference>
<dbReference type="InterPro" id="IPR045913">
    <property type="entry name" value="TBC20/Gyp8-like"/>
</dbReference>
<dbReference type="PANTHER" id="PTHR20913:SF7">
    <property type="entry name" value="RE60063P"/>
    <property type="match status" value="1"/>
</dbReference>
<dbReference type="PANTHER" id="PTHR20913">
    <property type="entry name" value="TBC1 DOMAIN FAMILY MEMBER 20/GTPASE"/>
    <property type="match status" value="1"/>
</dbReference>
<dbReference type="Pfam" id="PF00566">
    <property type="entry name" value="RabGAP-TBC"/>
    <property type="match status" value="1"/>
</dbReference>
<dbReference type="SMART" id="SM00164">
    <property type="entry name" value="TBC"/>
    <property type="match status" value="1"/>
</dbReference>
<dbReference type="SUPFAM" id="SSF47923">
    <property type="entry name" value="Ypt/Rab-GAP domain of gyp1p"/>
    <property type="match status" value="2"/>
</dbReference>
<dbReference type="PROSITE" id="PS50086">
    <property type="entry name" value="TBC_RABGAP"/>
    <property type="match status" value="1"/>
</dbReference>
<evidence type="ECO:0000255" key="1"/>
<evidence type="ECO:0000255" key="2">
    <source>
        <dbReference type="PROSITE-ProRule" id="PRU00163"/>
    </source>
</evidence>
<evidence type="ECO:0000269" key="3">
    <source>
    </source>
</evidence>
<evidence type="ECO:0000269" key="4">
    <source>
    </source>
</evidence>
<comment type="function">
    <text evidence="3">Has a role in vesicular trafficking and septation during cytokinesis.</text>
</comment>
<comment type="subcellular location">
    <subcellularLocation>
        <location evidence="3 4">Endoplasmic reticulum membrane</location>
        <topology evidence="3 4">Single-pass membrane protein</topology>
    </subcellularLocation>
</comment>
<protein>
    <recommendedName>
        <fullName>GTPase-activating protein gyp10</fullName>
    </recommendedName>
</protein>
<accession>O94661</accession>
<reference key="1">
    <citation type="journal article" date="2002" name="Nature">
        <title>The genome sequence of Schizosaccharomyces pombe.</title>
        <authorList>
            <person name="Wood V."/>
            <person name="Gwilliam R."/>
            <person name="Rajandream M.A."/>
            <person name="Lyne M.H."/>
            <person name="Lyne R."/>
            <person name="Stewart A."/>
            <person name="Sgouros J.G."/>
            <person name="Peat N."/>
            <person name="Hayles J."/>
            <person name="Baker S.G."/>
            <person name="Basham D."/>
            <person name="Bowman S."/>
            <person name="Brooks K."/>
            <person name="Brown D."/>
            <person name="Brown S."/>
            <person name="Chillingworth T."/>
            <person name="Churcher C.M."/>
            <person name="Collins M."/>
            <person name="Connor R."/>
            <person name="Cronin A."/>
            <person name="Davis P."/>
            <person name="Feltwell T."/>
            <person name="Fraser A."/>
            <person name="Gentles S."/>
            <person name="Goble A."/>
            <person name="Hamlin N."/>
            <person name="Harris D.E."/>
            <person name="Hidalgo J."/>
            <person name="Hodgson G."/>
            <person name="Holroyd S."/>
            <person name="Hornsby T."/>
            <person name="Howarth S."/>
            <person name="Huckle E.J."/>
            <person name="Hunt S."/>
            <person name="Jagels K."/>
            <person name="James K.D."/>
            <person name="Jones L."/>
            <person name="Jones M."/>
            <person name="Leather S."/>
            <person name="McDonald S."/>
            <person name="McLean J."/>
            <person name="Mooney P."/>
            <person name="Moule S."/>
            <person name="Mungall K.L."/>
            <person name="Murphy L.D."/>
            <person name="Niblett D."/>
            <person name="Odell C."/>
            <person name="Oliver K."/>
            <person name="O'Neil S."/>
            <person name="Pearson D."/>
            <person name="Quail M.A."/>
            <person name="Rabbinowitsch E."/>
            <person name="Rutherford K.M."/>
            <person name="Rutter S."/>
            <person name="Saunders D."/>
            <person name="Seeger K."/>
            <person name="Sharp S."/>
            <person name="Skelton J."/>
            <person name="Simmonds M.N."/>
            <person name="Squares R."/>
            <person name="Squares S."/>
            <person name="Stevens K."/>
            <person name="Taylor K."/>
            <person name="Taylor R.G."/>
            <person name="Tivey A."/>
            <person name="Walsh S.V."/>
            <person name="Warren T."/>
            <person name="Whitehead S."/>
            <person name="Woodward J.R."/>
            <person name="Volckaert G."/>
            <person name="Aert R."/>
            <person name="Robben J."/>
            <person name="Grymonprez B."/>
            <person name="Weltjens I."/>
            <person name="Vanstreels E."/>
            <person name="Rieger M."/>
            <person name="Schaefer M."/>
            <person name="Mueller-Auer S."/>
            <person name="Gabel C."/>
            <person name="Fuchs M."/>
            <person name="Duesterhoeft A."/>
            <person name="Fritzc C."/>
            <person name="Holzer E."/>
            <person name="Moestl D."/>
            <person name="Hilbert H."/>
            <person name="Borzym K."/>
            <person name="Langer I."/>
            <person name="Beck A."/>
            <person name="Lehrach H."/>
            <person name="Reinhardt R."/>
            <person name="Pohl T.M."/>
            <person name="Eger P."/>
            <person name="Zimmermann W."/>
            <person name="Wedler H."/>
            <person name="Wambutt R."/>
            <person name="Purnelle B."/>
            <person name="Goffeau A."/>
            <person name="Cadieu E."/>
            <person name="Dreano S."/>
            <person name="Gloux S."/>
            <person name="Lelaure V."/>
            <person name="Mottier S."/>
            <person name="Galibert F."/>
            <person name="Aves S.J."/>
            <person name="Xiang Z."/>
            <person name="Hunt C."/>
            <person name="Moore K."/>
            <person name="Hurst S.M."/>
            <person name="Lucas M."/>
            <person name="Rochet M."/>
            <person name="Gaillardin C."/>
            <person name="Tallada V.A."/>
            <person name="Garzon A."/>
            <person name="Thode G."/>
            <person name="Daga R.R."/>
            <person name="Cruzado L."/>
            <person name="Jimenez J."/>
            <person name="Sanchez M."/>
            <person name="del Rey F."/>
            <person name="Benito J."/>
            <person name="Dominguez A."/>
            <person name="Revuelta J.L."/>
            <person name="Moreno S."/>
            <person name="Armstrong J."/>
            <person name="Forsburg S.L."/>
            <person name="Cerutti L."/>
            <person name="Lowe T."/>
            <person name="McCombie W.R."/>
            <person name="Paulsen I."/>
            <person name="Potashkin J."/>
            <person name="Shpakovski G.V."/>
            <person name="Ussery D."/>
            <person name="Barrell B.G."/>
            <person name="Nurse P."/>
        </authorList>
    </citation>
    <scope>NUCLEOTIDE SEQUENCE [LARGE SCALE GENOMIC DNA]</scope>
    <source>
        <strain>972 / ATCC 24843</strain>
    </source>
</reference>
<reference key="2">
    <citation type="journal article" date="2005" name="J. Cell Sci.">
        <title>Cell wall remodeling at the fission yeast cell division site requires the Rho-GEF Rgf3p.</title>
        <authorList>
            <person name="Morrell-Falvey J.L."/>
            <person name="Ren L."/>
            <person name="Feoktistova A."/>
            <person name="Haese G.D."/>
            <person name="Gould K.L."/>
        </authorList>
    </citation>
    <scope>FUNCTION</scope>
    <scope>SUBCELLULAR LOCATION</scope>
</reference>
<reference key="3">
    <citation type="journal article" date="2006" name="Nat. Biotechnol.">
        <title>ORFeome cloning and global analysis of protein localization in the fission yeast Schizosaccharomyces pombe.</title>
        <authorList>
            <person name="Matsuyama A."/>
            <person name="Arai R."/>
            <person name="Yashiroda Y."/>
            <person name="Shirai A."/>
            <person name="Kamata A."/>
            <person name="Sekido S."/>
            <person name="Kobayashi Y."/>
            <person name="Hashimoto A."/>
            <person name="Hamamoto M."/>
            <person name="Hiraoka Y."/>
            <person name="Horinouchi S."/>
            <person name="Yoshida M."/>
        </authorList>
    </citation>
    <scope>SUBCELLULAR LOCATION [LARGE SCALE ANALYSIS]</scope>
</reference>
<organism>
    <name type="scientific">Schizosaccharomyces pombe (strain 972 / ATCC 24843)</name>
    <name type="common">Fission yeast</name>
    <dbReference type="NCBI Taxonomy" id="284812"/>
    <lineage>
        <taxon>Eukaryota</taxon>
        <taxon>Fungi</taxon>
        <taxon>Dikarya</taxon>
        <taxon>Ascomycota</taxon>
        <taxon>Taphrinomycotina</taxon>
        <taxon>Schizosaccharomycetes</taxon>
        <taxon>Schizosaccharomycetales</taxon>
        <taxon>Schizosaccharomycetaceae</taxon>
        <taxon>Schizosaccharomyces</taxon>
    </lineage>
</organism>
<name>GYP10_SCHPO</name>
<gene>
    <name type="primary">gyp10</name>
    <name type="ORF">SPBC651.03c</name>
</gene>
<keyword id="KW-0256">Endoplasmic reticulum</keyword>
<keyword id="KW-0343">GTPase activation</keyword>
<keyword id="KW-0472">Membrane</keyword>
<keyword id="KW-1185">Reference proteome</keyword>
<keyword id="KW-0812">Transmembrane</keyword>
<keyword id="KW-1133">Transmembrane helix</keyword>
<sequence>MKKKEIKQLKNEIKIALLNSDVETLSHIGKEGHGFLMKSLRKSVWVSLCGLSCRHRMECLSRSTSQSSYADQNQVHLDSERSFFQYKLNPFLLRKHRSQLTKLLSVVFKHYPELCYYQGLHDIAQILLLTLPFSHALPLMEHLVFYRLRDFMLPTLDGTVKQLQLILAVIKARDPTLYEYLIKADIQCYFALSWLITWFAHDVSDISVVCRLFDFFISSHPLTVVYTCAQVVLDNRTSIIELLWDNSGADLLHSYLCKLPASINVNQLIKNTCATISAVPFSSLPLDRYQISPYSCLRNTGDPWEYMSRSNGLLLFRLQLAELQEEKHKPGTKVPAVFLQENIFNGCNMLAAITVIGIGIVASQLIPKSTSNS</sequence>